<protein>
    <recommendedName>
        <fullName>Conotoxin Pu3.6</fullName>
    </recommendedName>
</protein>
<evidence type="ECO:0000250" key="1"/>
<evidence type="ECO:0000250" key="2">
    <source>
        <dbReference type="UniProtKB" id="Q5EHP3"/>
    </source>
</evidence>
<evidence type="ECO:0000255" key="3"/>
<evidence type="ECO:0000305" key="4"/>
<evidence type="ECO:0000305" key="5">
    <source>
    </source>
</evidence>
<organism>
    <name type="scientific">Conus pulicarius</name>
    <name type="common">Flea-bitten cone</name>
    <dbReference type="NCBI Taxonomy" id="93154"/>
    <lineage>
        <taxon>Eukaryota</taxon>
        <taxon>Metazoa</taxon>
        <taxon>Spiralia</taxon>
        <taxon>Lophotrochozoa</taxon>
        <taxon>Mollusca</taxon>
        <taxon>Gastropoda</taxon>
        <taxon>Caenogastropoda</taxon>
        <taxon>Neogastropoda</taxon>
        <taxon>Conoidea</taxon>
        <taxon>Conidae</taxon>
        <taxon>Conus</taxon>
    </lineage>
</organism>
<name>CM36_CONPL</name>
<proteinExistence type="evidence at transcript level"/>
<feature type="signal peptide" evidence="3">
    <location>
        <begin position="1" status="less than"/>
        <end position="12"/>
    </location>
</feature>
<feature type="propeptide" id="PRO_0000397194" evidence="1">
    <location>
        <begin position="13"/>
        <end position="41"/>
    </location>
</feature>
<feature type="peptide" id="PRO_0000397195" description="Conotoxin Pu3.6">
    <location>
        <begin position="44"/>
        <end position="58"/>
    </location>
</feature>
<feature type="disulfide bond" evidence="2">
    <location>
        <begin position="44"/>
        <end position="56"/>
    </location>
</feature>
<feature type="disulfide bond" evidence="2">
    <location>
        <begin position="45"/>
        <end position="54"/>
    </location>
</feature>
<feature type="disulfide bond" evidence="2">
    <location>
        <begin position="50"/>
        <end position="57"/>
    </location>
</feature>
<feature type="non-terminal residue">
    <location>
        <position position="1"/>
    </location>
</feature>
<accession>P0CH21</accession>
<reference key="1">
    <citation type="journal article" date="2010" name="Peptides">
        <title>Novel conopeptides in a form of disulfide-crosslinked dimer.</title>
        <authorList>
            <person name="Wu X.-C."/>
            <person name="Zhou M."/>
            <person name="Peng C."/>
            <person name="Shao X.-X."/>
            <person name="Guo Z.-Y."/>
            <person name="Chi C.-W."/>
        </authorList>
    </citation>
    <scope>NUCLEOTIDE SEQUENCE [MRNA]</scope>
    <source>
        <tissue>Venom duct</tissue>
    </source>
</reference>
<dbReference type="GO" id="GO:0005576">
    <property type="term" value="C:extracellular region"/>
    <property type="evidence" value="ECO:0007669"/>
    <property type="project" value="UniProtKB-SubCell"/>
</dbReference>
<dbReference type="GO" id="GO:0008200">
    <property type="term" value="F:ion channel inhibitor activity"/>
    <property type="evidence" value="ECO:0007669"/>
    <property type="project" value="InterPro"/>
</dbReference>
<dbReference type="GO" id="GO:0090729">
    <property type="term" value="F:toxin activity"/>
    <property type="evidence" value="ECO:0007669"/>
    <property type="project" value="UniProtKB-KW"/>
</dbReference>
<dbReference type="InterPro" id="IPR004214">
    <property type="entry name" value="Conotoxin"/>
</dbReference>
<dbReference type="Pfam" id="PF02950">
    <property type="entry name" value="Conotoxin"/>
    <property type="match status" value="1"/>
</dbReference>
<comment type="subcellular location">
    <subcellularLocation>
        <location evidence="4">Secreted</location>
    </subcellularLocation>
</comment>
<comment type="tissue specificity">
    <text evidence="5">Expressed by the venom duct.</text>
</comment>
<comment type="domain">
    <text evidence="4">The cysteine framework is III (CC-C-C-CC). Classified in the M-1 branch, since 1 residue stands between the fourth and the fifth cysteine residues.</text>
</comment>
<comment type="similarity">
    <text evidence="4">Belongs to the conotoxin M superfamily.</text>
</comment>
<keyword id="KW-0165">Cleavage on pair of basic residues</keyword>
<keyword id="KW-1015">Disulfide bond</keyword>
<keyword id="KW-0964">Secreted</keyword>
<keyword id="KW-0732">Signal</keyword>
<keyword id="KW-0800">Toxin</keyword>
<sequence>VLFPLATLQLDADQPVERYAENKQDLNPDERMKFILHALGQRRCCISPACNDSCYCCQ</sequence>